<sequence>MKPESGQALFHVALASCLCVATVHTGIFEHVSVQVGYEYYAEAPVTSLPAFLAMPFNSLVNMAYVFLGVYWLRSQARAPGGPAERRRARYLKDVFAGMALVYGPVQWLRIGMQTQPTAVLDQWLTLPIFAWPVAWCLCLDRGWKPWLFLAVEGLSLCSYSLALLHPHGFELALGLHIAAAVGQALRIQGRHGNISSGTYLALGVLSCLGFVVLKLCDHELAQWHLFQQLTGHFWSKVCDVLQFHFAFLFLTSLHTC</sequence>
<proteinExistence type="evidence at transcript level"/>
<evidence type="ECO:0000255" key="1"/>
<evidence type="ECO:0000305" key="2"/>
<feature type="chain" id="PRO_0000282915" description="Transmembrane protein 187">
    <location>
        <begin position="1"/>
        <end position="256"/>
    </location>
</feature>
<feature type="transmembrane region" description="Helical" evidence="1">
    <location>
        <begin position="8"/>
        <end position="28"/>
    </location>
</feature>
<feature type="transmembrane region" description="Helical" evidence="1">
    <location>
        <begin position="51"/>
        <end position="71"/>
    </location>
</feature>
<feature type="transmembrane region" description="Helical" evidence="1">
    <location>
        <begin position="94"/>
        <end position="112"/>
    </location>
</feature>
<feature type="transmembrane region" description="Helical" evidence="1">
    <location>
        <begin position="119"/>
        <end position="139"/>
    </location>
</feature>
<feature type="transmembrane region" description="Helical" evidence="1">
    <location>
        <begin position="146"/>
        <end position="168"/>
    </location>
</feature>
<feature type="transmembrane region" description="Helical" evidence="1">
    <location>
        <begin position="193"/>
        <end position="213"/>
    </location>
</feature>
<feature type="transmembrane region" description="Helical" evidence="1">
    <location>
        <begin position="233"/>
        <end position="253"/>
    </location>
</feature>
<name>TM187_BOVIN</name>
<reference key="1">
    <citation type="submission" date="2006-08" db="EMBL/GenBank/DDBJ databases">
        <authorList>
            <consortium name="NIH - Mammalian Gene Collection (MGC) project"/>
        </authorList>
    </citation>
    <scope>NUCLEOTIDE SEQUENCE [LARGE SCALE MRNA]</scope>
    <source>
        <strain>Hereford</strain>
        <tissue>Fetal liver</tissue>
    </source>
</reference>
<organism>
    <name type="scientific">Bos taurus</name>
    <name type="common">Bovine</name>
    <dbReference type="NCBI Taxonomy" id="9913"/>
    <lineage>
        <taxon>Eukaryota</taxon>
        <taxon>Metazoa</taxon>
        <taxon>Chordata</taxon>
        <taxon>Craniata</taxon>
        <taxon>Vertebrata</taxon>
        <taxon>Euteleostomi</taxon>
        <taxon>Mammalia</taxon>
        <taxon>Eutheria</taxon>
        <taxon>Laurasiatheria</taxon>
        <taxon>Artiodactyla</taxon>
        <taxon>Ruminantia</taxon>
        <taxon>Pecora</taxon>
        <taxon>Bovidae</taxon>
        <taxon>Bovinae</taxon>
        <taxon>Bos</taxon>
    </lineage>
</organism>
<dbReference type="EMBL" id="BC120100">
    <property type="protein sequence ID" value="AAI20101.1"/>
    <property type="molecule type" value="mRNA"/>
</dbReference>
<dbReference type="RefSeq" id="NP_001068823.1">
    <property type="nucleotide sequence ID" value="NM_001075355.2"/>
</dbReference>
<dbReference type="RefSeq" id="XP_005227742.1">
    <property type="nucleotide sequence ID" value="XM_005227685.5"/>
</dbReference>
<dbReference type="RefSeq" id="XP_005227744.1">
    <property type="nucleotide sequence ID" value="XM_005227687.5"/>
</dbReference>
<dbReference type="RefSeq" id="XP_005227745.1">
    <property type="nucleotide sequence ID" value="XM_005227688.5"/>
</dbReference>
<dbReference type="RefSeq" id="XP_010819862.1">
    <property type="nucleotide sequence ID" value="XM_010821560.4"/>
</dbReference>
<dbReference type="RefSeq" id="XP_010819863.1">
    <property type="nucleotide sequence ID" value="XM_010821561.2"/>
</dbReference>
<dbReference type="RefSeq" id="XP_015316999.1">
    <property type="nucleotide sequence ID" value="XM_015461513.1"/>
</dbReference>
<dbReference type="RefSeq" id="XP_059739307.1">
    <property type="nucleotide sequence ID" value="XM_059883324.1"/>
</dbReference>
<dbReference type="RefSeq" id="XP_059739308.1">
    <property type="nucleotide sequence ID" value="XM_059883325.1"/>
</dbReference>
<dbReference type="FunCoup" id="Q0VCM2">
    <property type="interactions" value="9"/>
</dbReference>
<dbReference type="STRING" id="9913.ENSBTAP00000010891"/>
<dbReference type="PaxDb" id="9913-ENSBTAP00000010891"/>
<dbReference type="Ensembl" id="ENSBTAT00000010891.5">
    <property type="protein sequence ID" value="ENSBTAP00000010891.3"/>
    <property type="gene ID" value="ENSBTAG00000008278.5"/>
</dbReference>
<dbReference type="Ensembl" id="ENSBTAT00000102768.1">
    <property type="protein sequence ID" value="ENSBTAP00000092582.1"/>
    <property type="gene ID" value="ENSBTAG00000008278.5"/>
</dbReference>
<dbReference type="Ensembl" id="ENSBTAT00000110441.1">
    <property type="protein sequence ID" value="ENSBTAP00000083851.1"/>
    <property type="gene ID" value="ENSBTAG00000008278.5"/>
</dbReference>
<dbReference type="Ensembl" id="ENSBTAT00000123223.1">
    <property type="protein sequence ID" value="ENSBTAP00000075739.1"/>
    <property type="gene ID" value="ENSBTAG00000008278.5"/>
</dbReference>
<dbReference type="Ensembl" id="ENSBTAT00000126579.1">
    <property type="protein sequence ID" value="ENSBTAP00000089337.1"/>
    <property type="gene ID" value="ENSBTAG00000008278.5"/>
</dbReference>
<dbReference type="Ensembl" id="ENSBTAT00000131362.1">
    <property type="protein sequence ID" value="ENSBTAP00000102230.1"/>
    <property type="gene ID" value="ENSBTAG00000008278.5"/>
</dbReference>
<dbReference type="GeneID" id="508380"/>
<dbReference type="KEGG" id="bta:508380"/>
<dbReference type="CTD" id="8269"/>
<dbReference type="VEuPathDB" id="HostDB:ENSBTAG00000008278"/>
<dbReference type="VGNC" id="VGNC:36014">
    <property type="gene designation" value="TMEM187"/>
</dbReference>
<dbReference type="eggNOG" id="ENOG502QUS7">
    <property type="taxonomic scope" value="Eukaryota"/>
</dbReference>
<dbReference type="GeneTree" id="ENSGT00390000011272"/>
<dbReference type="HOGENOM" id="CLU_093204_0_0_1"/>
<dbReference type="InParanoid" id="Q0VCM2"/>
<dbReference type="OMA" id="FLAMPCN"/>
<dbReference type="OrthoDB" id="5973769at2759"/>
<dbReference type="TreeFam" id="TF353833"/>
<dbReference type="Proteomes" id="UP000009136">
    <property type="component" value="Chromosome X"/>
</dbReference>
<dbReference type="Bgee" id="ENSBTAG00000008278">
    <property type="expression patterns" value="Expressed in liver and 100 other cell types or tissues"/>
</dbReference>
<dbReference type="GO" id="GO:0016020">
    <property type="term" value="C:membrane"/>
    <property type="evidence" value="ECO:0007669"/>
    <property type="project" value="UniProtKB-SubCell"/>
</dbReference>
<dbReference type="GO" id="GO:0030133">
    <property type="term" value="C:transport vesicle"/>
    <property type="evidence" value="ECO:0000318"/>
    <property type="project" value="GO_Central"/>
</dbReference>
<dbReference type="InterPro" id="IPR028066">
    <property type="entry name" value="TMEM187"/>
</dbReference>
<dbReference type="PANTHER" id="PTHR15066">
    <property type="entry name" value="TRANSMEMBRANE PROTEIN 187"/>
    <property type="match status" value="1"/>
</dbReference>
<dbReference type="PANTHER" id="PTHR15066:SF0">
    <property type="entry name" value="TRANSMEMBRANE PROTEIN 187"/>
    <property type="match status" value="1"/>
</dbReference>
<dbReference type="Pfam" id="PF15100">
    <property type="entry name" value="TMEM187"/>
    <property type="match status" value="1"/>
</dbReference>
<gene>
    <name type="primary">TMEM187</name>
</gene>
<accession>Q0VCM2</accession>
<keyword id="KW-0472">Membrane</keyword>
<keyword id="KW-1185">Reference proteome</keyword>
<keyword id="KW-0812">Transmembrane</keyword>
<keyword id="KW-1133">Transmembrane helix</keyword>
<protein>
    <recommendedName>
        <fullName>Transmembrane protein 187</fullName>
    </recommendedName>
</protein>
<comment type="subcellular location">
    <subcellularLocation>
        <location evidence="2">Membrane</location>
        <topology evidence="2">Multi-pass membrane protein</topology>
    </subcellularLocation>
</comment>